<dbReference type="EMBL" id="Z28644">
    <property type="protein sequence ID" value="CAA82267.1"/>
    <property type="molecule type" value="mRNA"/>
</dbReference>
<dbReference type="SMR" id="P46272"/>
<dbReference type="GO" id="GO:0005634">
    <property type="term" value="C:nucleus"/>
    <property type="evidence" value="ECO:0007669"/>
    <property type="project" value="UniProtKB-SubCell"/>
</dbReference>
<dbReference type="GO" id="GO:0003677">
    <property type="term" value="F:DNA binding"/>
    <property type="evidence" value="ECO:0007669"/>
    <property type="project" value="UniProtKB-KW"/>
</dbReference>
<dbReference type="GO" id="GO:0006352">
    <property type="term" value="P:DNA-templated transcription initiation"/>
    <property type="evidence" value="ECO:0007669"/>
    <property type="project" value="InterPro"/>
</dbReference>
<dbReference type="CDD" id="cd04516">
    <property type="entry name" value="TBP_eukaryotes"/>
    <property type="match status" value="1"/>
</dbReference>
<dbReference type="FunFam" id="3.30.310.10:FF:000001">
    <property type="entry name" value="TATA-box-binding protein 2"/>
    <property type="match status" value="1"/>
</dbReference>
<dbReference type="FunFam" id="3.30.310.10:FF:000002">
    <property type="entry name" value="TATA-box-binding protein 2"/>
    <property type="match status" value="1"/>
</dbReference>
<dbReference type="Gene3D" id="3.30.310.10">
    <property type="entry name" value="TATA-Binding Protein"/>
    <property type="match status" value="2"/>
</dbReference>
<dbReference type="HAMAP" id="MF_00408">
    <property type="entry name" value="TATA_bind_prot_arch"/>
    <property type="match status" value="1"/>
</dbReference>
<dbReference type="InterPro" id="IPR000814">
    <property type="entry name" value="TBP"/>
</dbReference>
<dbReference type="InterPro" id="IPR030491">
    <property type="entry name" value="TBP_CS"/>
</dbReference>
<dbReference type="InterPro" id="IPR012295">
    <property type="entry name" value="TBP_dom_sf"/>
</dbReference>
<dbReference type="InterPro" id="IPR033710">
    <property type="entry name" value="TBP_eukaryotic"/>
</dbReference>
<dbReference type="PANTHER" id="PTHR10126">
    <property type="entry name" value="TATA-BOX BINDING PROTEIN"/>
    <property type="match status" value="1"/>
</dbReference>
<dbReference type="Pfam" id="PF00352">
    <property type="entry name" value="TBP"/>
    <property type="match status" value="2"/>
</dbReference>
<dbReference type="PRINTS" id="PR00686">
    <property type="entry name" value="TIFACTORIID"/>
</dbReference>
<dbReference type="SUPFAM" id="SSF55945">
    <property type="entry name" value="TATA-box binding protein-like"/>
    <property type="match status" value="2"/>
</dbReference>
<dbReference type="PROSITE" id="PS00351">
    <property type="entry name" value="TFIID"/>
    <property type="match status" value="2"/>
</dbReference>
<name>TBP_ACEPE</name>
<proteinExistence type="evidence at transcript level"/>
<feature type="chain" id="PRO_0000153975" description="TATA-box-binding protein">
    <location>
        <begin position="1"/>
        <end position="191"/>
    </location>
</feature>
<feature type="repeat" description="1">
    <location>
        <begin position="18"/>
        <end position="94"/>
    </location>
</feature>
<feature type="repeat" description="2">
    <location>
        <begin position="108"/>
        <end position="185"/>
    </location>
</feature>
<comment type="function">
    <text>General transcription factor that functions at the core of the DNA-binding multiprotein factor TFIID. Binding of TFIID to the TATA box is the initial transcriptional step of the pre-initiation complex (PIC), playing a role in the activation of eukaryotic genes transcribed by RNA polymerase II.</text>
</comment>
<comment type="subunit">
    <text>Belongs to the TFIID complex together with the TBP-associated factors (TAFs). Binds DNA as monomer.</text>
</comment>
<comment type="subcellular location">
    <subcellularLocation>
        <location>Nucleus</location>
    </subcellularLocation>
</comment>
<comment type="similarity">
    <text evidence="1">Belongs to the TBP family.</text>
</comment>
<organism>
    <name type="scientific">Acetabularia peniculus</name>
    <name type="common">Green alga</name>
    <name type="synonym">Polyphysa peniculus</name>
    <dbReference type="NCBI Taxonomy" id="35862"/>
    <lineage>
        <taxon>Eukaryota</taxon>
        <taxon>Viridiplantae</taxon>
        <taxon>Chlorophyta</taxon>
        <taxon>Ulvophyceae</taxon>
        <taxon>TCBD clade</taxon>
        <taxon>Dasycladales</taxon>
        <taxon>Polyphysaceae</taxon>
        <taxon>Acetabularia</taxon>
    </lineage>
</organism>
<accession>P46272</accession>
<reference key="1">
    <citation type="submission" date="1993-12" db="EMBL/GenBank/DDBJ databases">
        <authorList>
            <person name="Frank S."/>
            <person name="Vugrek O."/>
            <person name="Menzel D."/>
        </authorList>
    </citation>
    <scope>NUCLEOTIDE SEQUENCE [MRNA]</scope>
</reference>
<keyword id="KW-0238">DNA-binding</keyword>
<keyword id="KW-0539">Nucleus</keyword>
<keyword id="KW-0677">Repeat</keyword>
<keyword id="KW-0804">Transcription</keyword>
<protein>
    <recommendedName>
        <fullName>TATA-box-binding protein</fullName>
    </recommendedName>
    <alternativeName>
        <fullName>TATA sequence-binding protein</fullName>
        <shortName>TBP</shortName>
    </alternativeName>
    <alternativeName>
        <fullName>TATA-binding factor</fullName>
    </alternativeName>
    <alternativeName>
        <fullName>TATA-box factor</fullName>
    </alternativeName>
    <alternativeName>
        <fullName>Transcription initiation factor TFIID TBP subunit</fullName>
    </alternativeName>
</protein>
<sequence>MTGDVDMSLHPSGIIPELQNVVSTVNLGCTLELKEIAMQARNAEYNPKRFAAVIMRIRDPKTTALIFGSGKMVCTGAKSEQDSRTAARKYAKIVQKLGFPAKFTEFKIQNIVGSCDVKFPIRMEPLAYQHQQFCSYEPELFPGLIYRMLQPKIVLLIFVSGKVVLTGAKERTEIYRAFEQIYPVLTQFRKR</sequence>
<evidence type="ECO:0000305" key="1"/>